<comment type="subcellular location">
    <subcellularLocation>
        <location evidence="4">Cell membrane</location>
        <topology evidence="4">Single-pass membrane protein</topology>
    </subcellularLocation>
</comment>
<comment type="disruption phenotype">
    <text evidence="3">Probably essential, it was not disrupted in a global transposon mutagenesis study.</text>
</comment>
<accession>P22747</accession>
<accession>Q49257</accession>
<accession>Q49284</accession>
<accession>Q49385</accession>
<accession>Q49481</accession>
<accession>Q49482</accession>
<dbReference type="EMBL" id="M31431">
    <property type="protein sequence ID" value="AAA25421.1"/>
    <property type="molecule type" value="Genomic_DNA"/>
</dbReference>
<dbReference type="EMBL" id="L43967">
    <property type="protein sequence ID" value="AAC71411.2"/>
    <property type="molecule type" value="Genomic_DNA"/>
</dbReference>
<dbReference type="EMBL" id="U02124">
    <property type="protein sequence ID" value="AAD12399.1"/>
    <property type="molecule type" value="Genomic_DNA"/>
</dbReference>
<dbReference type="EMBL" id="U02161">
    <property type="protein sequence ID" value="AAD12443.1"/>
    <property type="molecule type" value="Genomic_DNA"/>
</dbReference>
<dbReference type="EMBL" id="U34967">
    <property type="protein sequence ID" value="AAA88890.1"/>
    <property type="molecule type" value="Genomic_DNA"/>
</dbReference>
<dbReference type="EMBL" id="U02157">
    <property type="protein sequence ID" value="AAD12439.1"/>
    <property type="molecule type" value="Genomic_DNA"/>
</dbReference>
<dbReference type="EMBL" id="U34970">
    <property type="protein sequence ID" value="AAA88899.1"/>
    <property type="molecule type" value="Genomic_DNA"/>
</dbReference>
<dbReference type="EMBL" id="X61525">
    <property type="protein sequence ID" value="CAB98130.1"/>
    <property type="molecule type" value="Genomic_DNA"/>
</dbReference>
<dbReference type="EMBL" id="X61527">
    <property type="protein sequence ID" value="CAB98131.1"/>
    <property type="molecule type" value="Genomic_DNA"/>
</dbReference>
<dbReference type="PIR" id="C64221">
    <property type="entry name" value="C64221"/>
</dbReference>
<dbReference type="PDB" id="5OX7">
    <property type="method" value="X-ray"/>
    <property type="resolution" value="2.40 A"/>
    <property type="chains" value="A=23-939"/>
</dbReference>
<dbReference type="PDB" id="6R3T">
    <property type="method" value="X-ray"/>
    <property type="resolution" value="2.73 A"/>
    <property type="chains" value="A=23-939"/>
</dbReference>
<dbReference type="PDB" id="6R41">
    <property type="method" value="X-ray"/>
    <property type="resolution" value="2.21 A"/>
    <property type="chains" value="A=23-939"/>
</dbReference>
<dbReference type="PDB" id="6R43">
    <property type="method" value="X-ray"/>
    <property type="resolution" value="2.52 A"/>
    <property type="chains" value="A=23-939"/>
</dbReference>
<dbReference type="PDB" id="6RUT">
    <property type="method" value="X-ray"/>
    <property type="resolution" value="2.65 A"/>
    <property type="chains" value="A/C/E/G=23-818"/>
</dbReference>
<dbReference type="PDB" id="6SE5">
    <property type="method" value="X-ray"/>
    <property type="resolution" value="2.21 A"/>
    <property type="chains" value="A=23-939"/>
</dbReference>
<dbReference type="PDB" id="6SE7">
    <property type="method" value="X-ray"/>
    <property type="resolution" value="1.87 A"/>
    <property type="chains" value="A=23-939"/>
</dbReference>
<dbReference type="PDB" id="6YRK">
    <property type="method" value="EM"/>
    <property type="resolution" value="4.10 A"/>
    <property type="chains" value="A=27-814"/>
</dbReference>
<dbReference type="PDB" id="8PBX">
    <property type="method" value="EM"/>
    <property type="resolution" value="3.30 A"/>
    <property type="chains" value="A=1-1053"/>
</dbReference>
<dbReference type="PDB" id="8PBY">
    <property type="method" value="EM"/>
    <property type="resolution" value="3.70 A"/>
    <property type="chains" value="A=1-1053"/>
</dbReference>
<dbReference type="PDB" id="8PBZ">
    <property type="method" value="EM"/>
    <property type="resolution" value="11.00 A"/>
    <property type="chains" value="A/D=1-1053"/>
</dbReference>
<dbReference type="PDB" id="8PC0">
    <property type="method" value="EM"/>
    <property type="resolution" value="17.00 A"/>
    <property type="chains" value="A=1-1053"/>
</dbReference>
<dbReference type="PDB" id="8PC1">
    <property type="method" value="EM"/>
    <property type="resolution" value="18.00 A"/>
    <property type="chains" value="A=1-1053"/>
</dbReference>
<dbReference type="PDBsum" id="5OX7"/>
<dbReference type="PDBsum" id="6R3T"/>
<dbReference type="PDBsum" id="6R41"/>
<dbReference type="PDBsum" id="6R43"/>
<dbReference type="PDBsum" id="6RUT"/>
<dbReference type="PDBsum" id="6SE5"/>
<dbReference type="PDBsum" id="6SE7"/>
<dbReference type="PDBsum" id="6YRK"/>
<dbReference type="PDBsum" id="8PBX"/>
<dbReference type="PDBsum" id="8PBY"/>
<dbReference type="PDBsum" id="8PBZ"/>
<dbReference type="PDBsum" id="8PC0"/>
<dbReference type="PDBsum" id="8PC1"/>
<dbReference type="EMDB" id="EMD-10890"/>
<dbReference type="EMDB" id="EMD-17587"/>
<dbReference type="EMDB" id="EMD-17588"/>
<dbReference type="EMDB" id="EMD-17591"/>
<dbReference type="EMDB" id="EMD-17592"/>
<dbReference type="EMDB" id="EMD-17593"/>
<dbReference type="SMR" id="P22747"/>
<dbReference type="STRING" id="243273.MG_192"/>
<dbReference type="UniLectin" id="P22747"/>
<dbReference type="KEGG" id="mge:MG_192"/>
<dbReference type="eggNOG" id="ENOG5030S6X">
    <property type="taxonomic scope" value="Bacteria"/>
</dbReference>
<dbReference type="HOGENOM" id="CLU_268940_0_0_14"/>
<dbReference type="InParanoid" id="P22747"/>
<dbReference type="Proteomes" id="UP000000807">
    <property type="component" value="Chromosome"/>
</dbReference>
<dbReference type="GO" id="GO:0005886">
    <property type="term" value="C:plasma membrane"/>
    <property type="evidence" value="ECO:0007669"/>
    <property type="project" value="UniProtKB-SubCell"/>
</dbReference>
<dbReference type="GO" id="GO:0007155">
    <property type="term" value="P:cell adhesion"/>
    <property type="evidence" value="ECO:0007669"/>
    <property type="project" value="UniProtKB-KW"/>
</dbReference>
<dbReference type="CDD" id="cd20279">
    <property type="entry name" value="adhesin_P110-like"/>
    <property type="match status" value="1"/>
</dbReference>
<dbReference type="InterPro" id="IPR045839">
    <property type="entry name" value="MGP3_C"/>
</dbReference>
<dbReference type="InterPro" id="IPR007885">
    <property type="entry name" value="MgpC"/>
</dbReference>
<dbReference type="Pfam" id="PF19342">
    <property type="entry name" value="MGP3_C"/>
    <property type="match status" value="1"/>
</dbReference>
<dbReference type="Pfam" id="PF05220">
    <property type="entry name" value="MgpC"/>
    <property type="match status" value="1"/>
</dbReference>
<sequence>MKTMRKQIYKKAYWLLLPFLPLALANTFLVKEDSKNVTAYTPFATPITDSKSDLVSLAQLDSSYQIADQTIHNTNLFVLFKSRDVKVKYESSGSNNISFDSTSQGEKPSYVVEFTNSTNIGIKWTMVKKYQLDVPNVSSDMNQVLKNLILEQPLTKYTLNSSLAKEKGKTQREVHLGSGQANQWTSQRNQHDLNNNPSPNASTGFKLTTGNAYRKLSESWPIYEPIDGTKQGKGKDSSGWSSTEENEAKNDAPSVSGGGSSSGTFNKYLNTKQALESIGILFDDQTPRNVITQLYYASTSKLAVTNNHIVVMGNSFLPSMWYWVVERSAQENASNKPTWFANTNLDWGEDKQKQFVENQLGYKETTSTNSHNFHSKSFTQPAYLISGIDSVNDQIIFSGFKAGSVGYDSSSSSSSSSSSSTKDQALAWSTTTSLDSKTGYKDLVTNDTGLNGPINGSFSIQDTFSFVVPYSGNHTNNGTTGPIKTAYPVKKDQKSTVKINSLINATPLNSYGDEGIGVFDALGLNYNFKSNQERLPSRTDQIFVYGIVSPNELRSAKSSADSTGSDTKVNWSNTQSRYLPVPYNYSEGIIDADGFKRPENRGASVTTFSGLKSIAPDGFANSIANFSVGLKAGIDPNPVMSGKKANYGAVVLTRGGVVRLNFNPGNDSLLSTTDNNIAPISFSFTPFTAAESAVDLTTFKEVTYNQESGLWSYIFDSSLKPSHDGKQTPVTDNMGFSVITVSRTGIELNQDQATTTLDVAPSALAVQSGIQSTTQTLTGVLPLSEEFSAVIAKDSDQNKIDIYKNNNGLFEIDTQLSNSVATNNGGLAPSYTENRVDAWGKVEFADNSVLQARNLVDKTVDEIINTPEILNSFFRFTPAFEDQKATLVATKQSDTSLSVSPRIQFLDGNFYDLNSTIAGVPLNIGFPSRVFAGFAALPAWVIPVSVGSSVGILFILLVLGLGIGIPMYRVRKLQDASFVNVFKKVDTLTTAVGSVYKKIITQTGVVKKAPSALKAANPSVKKPAAFLKPPVQPPSKPEGEQKAVEVKSEETKS</sequence>
<proteinExistence type="evidence at protein level"/>
<name>MGP3_MYCGE</name>
<organism>
    <name type="scientific">Mycoplasma genitalium (strain ATCC 33530 / DSM 19775 / NCTC 10195 / G37)</name>
    <name type="common">Mycoplasmoides genitalium</name>
    <dbReference type="NCBI Taxonomy" id="243273"/>
    <lineage>
        <taxon>Bacteria</taxon>
        <taxon>Bacillati</taxon>
        <taxon>Mycoplasmatota</taxon>
        <taxon>Mycoplasmoidales</taxon>
        <taxon>Mycoplasmoidaceae</taxon>
        <taxon>Mycoplasmoides</taxon>
    </lineage>
</organism>
<reference key="1">
    <citation type="journal article" date="1989" name="Gene">
        <title>Nucleotide sequence of the MgPa (mgp) operon of Mycoplasma genitalium and comparison to the P1 (mpp) operon of Mycoplasma pneumoniae.</title>
        <authorList>
            <person name="Inamine J.M."/>
            <person name="Loechel S."/>
            <person name="Collier A.M."/>
            <person name="Barile M.F."/>
            <person name="Hu P.-C."/>
        </authorList>
    </citation>
    <scope>NUCLEOTIDE SEQUENCE [GENOMIC DNA]</scope>
    <source>
        <strain>ATCC 33530 / DSM 19775 / NCTC 10195 / G37</strain>
    </source>
</reference>
<reference key="2">
    <citation type="journal article" date="1995" name="Science">
        <title>The minimal gene complement of Mycoplasma genitalium.</title>
        <authorList>
            <person name="Fraser C.M."/>
            <person name="Gocayne J.D."/>
            <person name="White O."/>
            <person name="Adams M.D."/>
            <person name="Clayton R.A."/>
            <person name="Fleischmann R.D."/>
            <person name="Bult C.J."/>
            <person name="Kerlavage A.R."/>
            <person name="Sutton G.G."/>
            <person name="Kelley J.M."/>
            <person name="Fritchman J.L."/>
            <person name="Weidman J.F."/>
            <person name="Small K.V."/>
            <person name="Sandusky M."/>
            <person name="Fuhrmann J.L."/>
            <person name="Nguyen D.T."/>
            <person name="Utterback T.R."/>
            <person name="Saudek D.M."/>
            <person name="Phillips C.A."/>
            <person name="Merrick J.M."/>
            <person name="Tomb J.-F."/>
            <person name="Dougherty B.A."/>
            <person name="Bott K.F."/>
            <person name="Hu P.-C."/>
            <person name="Lucier T.S."/>
            <person name="Peterson S.N."/>
            <person name="Smith H.O."/>
            <person name="Hutchison C.A. III"/>
            <person name="Venter J.C."/>
        </authorList>
    </citation>
    <scope>NUCLEOTIDE SEQUENCE [LARGE SCALE GENOMIC DNA]</scope>
    <source>
        <strain>ATCC 33530 / DSM 19775 / NCTC 10195 / G37</strain>
    </source>
</reference>
<reference key="3">
    <citation type="journal article" date="1993" name="J. Bacteriol.">
        <title>A survey of the Mycoplasma genitalium genome by using random sequencing.</title>
        <authorList>
            <person name="Peterson S.N."/>
            <person name="Hu P.-C."/>
            <person name="Bott K.F."/>
            <person name="Hutchison C.A. III"/>
        </authorList>
    </citation>
    <scope>NUCLEOTIDE SEQUENCE [GENOMIC DNA] OF 60-133; 260-370; 442-513; 770-903 AND 965-1053</scope>
    <source>
        <strain>ATCC 33530 / DSM 19775 / NCTC 10195 / G37</strain>
    </source>
</reference>
<reference key="4">
    <citation type="journal article" date="1991" name="Nucleic Acids Res.">
        <title>A random sequencing approach for placing markers on the physical map of Mycoplasma genitalium.</title>
        <authorList>
            <person name="Peterson S.N."/>
            <person name="Schramm N."/>
            <person name="Hu P.-C."/>
            <person name="Bott K.F."/>
            <person name="Hutchison C.A. III"/>
        </authorList>
    </citation>
    <scope>NUCLEOTIDE SEQUENCE [GENOMIC DNA] OF 770-965</scope>
    <source>
        <strain>ATCC 33530 / DSM 19775 / NCTC 10195 / G37</strain>
    </source>
</reference>
<reference key="5">
    <citation type="journal article" date="2006" name="Proc. Natl. Acad. Sci. U.S.A.">
        <title>Essential genes of a minimal bacterium.</title>
        <authorList>
            <person name="Glass J.I."/>
            <person name="Assad-Garcia N."/>
            <person name="Alperovich N."/>
            <person name="Yooseph S."/>
            <person name="Lewis M.R."/>
            <person name="Maruf M."/>
            <person name="Hutchison C.A. III"/>
            <person name="Smith H.O."/>
            <person name="Venter J.C."/>
        </authorList>
    </citation>
    <scope>SEQUENCE REVISION TO 419</scope>
    <scope>DISRUPTION PHENOTYPE</scope>
    <source>
        <strain>ATCC 33530 / DSM 19775 / NCTC 10195 / G37</strain>
    </source>
</reference>
<feature type="signal peptide" evidence="1">
    <location>
        <begin position="1"/>
        <end position="25"/>
    </location>
</feature>
<feature type="chain" id="PRO_0000021720" description="Mgp-operon protein 3">
    <location>
        <begin position="26"/>
        <end position="1053"/>
    </location>
</feature>
<feature type="transmembrane region" description="Helical" evidence="1">
    <location>
        <begin position="946"/>
        <end position="966"/>
    </location>
</feature>
<feature type="region of interest" description="Disordered" evidence="2">
    <location>
        <begin position="162"/>
        <end position="207"/>
    </location>
</feature>
<feature type="region of interest" description="Disordered" evidence="2">
    <location>
        <begin position="224"/>
        <end position="261"/>
    </location>
</feature>
<feature type="region of interest" description="Disordered" evidence="2">
    <location>
        <begin position="1024"/>
        <end position="1053"/>
    </location>
</feature>
<feature type="compositionally biased region" description="Basic and acidic residues" evidence="2">
    <location>
        <begin position="164"/>
        <end position="175"/>
    </location>
</feature>
<feature type="compositionally biased region" description="Polar residues" evidence="2">
    <location>
        <begin position="179"/>
        <end position="207"/>
    </location>
</feature>
<feature type="compositionally biased region" description="Basic and acidic residues" evidence="2">
    <location>
        <begin position="1037"/>
        <end position="1053"/>
    </location>
</feature>
<feature type="sequence conflict" description="In Ref. 3; AAD12399." evidence="4" ref="3">
    <original>LDSSYQIAD</original>
    <variation>MIKPLPLLS</variation>
    <location>
        <begin position="60"/>
        <end position="68"/>
    </location>
</feature>
<feature type="sequence conflict" description="In Ref. 3; AAD12399." evidence="4" ref="3">
    <original>TM</original>
    <variation>SV</variation>
    <location>
        <begin position="125"/>
        <end position="126"/>
    </location>
</feature>
<feature type="sequence conflict" description="In Ref. 3; AAD12439." evidence="4" ref="3">
    <original>TNNGTTGP</original>
    <variation>SNQISSGT</variation>
    <location>
        <begin position="475"/>
        <end position="482"/>
    </location>
</feature>
<feature type="sequence conflict" description="In Ref. 3; AAA88890." evidence="4" ref="3">
    <original>N</original>
    <variation>S</variation>
    <location>
        <position position="477"/>
    </location>
</feature>
<feature type="sequence conflict" description="In Ref. 3; CAB98131." evidence="4" ref="3">
    <original>SVSPRI</original>
    <variation>MSHQVS</variation>
    <location>
        <begin position="898"/>
        <end position="903"/>
    </location>
</feature>
<feature type="strand" evidence="11">
    <location>
        <begin position="27"/>
        <end position="31"/>
    </location>
</feature>
<feature type="strand" evidence="11">
    <location>
        <begin position="33"/>
        <end position="40"/>
    </location>
</feature>
<feature type="helix" evidence="11">
    <location>
        <begin position="54"/>
        <end position="57"/>
    </location>
</feature>
<feature type="strand" evidence="11">
    <location>
        <begin position="64"/>
        <end position="72"/>
    </location>
</feature>
<feature type="strand" evidence="11">
    <location>
        <begin position="75"/>
        <end position="82"/>
    </location>
</feature>
<feature type="strand" evidence="11">
    <location>
        <begin position="87"/>
        <end position="89"/>
    </location>
</feature>
<feature type="strand" evidence="11">
    <location>
        <begin position="91"/>
        <end position="94"/>
    </location>
</feature>
<feature type="strand" evidence="11">
    <location>
        <begin position="97"/>
        <end position="99"/>
    </location>
</feature>
<feature type="strand" evidence="11">
    <location>
        <begin position="102"/>
        <end position="104"/>
    </location>
</feature>
<feature type="strand" evidence="11">
    <location>
        <begin position="109"/>
        <end position="116"/>
    </location>
</feature>
<feature type="strand" evidence="11">
    <location>
        <begin position="119"/>
        <end position="121"/>
    </location>
</feature>
<feature type="strand" evidence="11">
    <location>
        <begin position="124"/>
        <end position="132"/>
    </location>
</feature>
<feature type="helix" evidence="11">
    <location>
        <begin position="139"/>
        <end position="145"/>
    </location>
</feature>
<feature type="strand" evidence="11">
    <location>
        <begin position="149"/>
        <end position="151"/>
    </location>
</feature>
<feature type="helix" evidence="11">
    <location>
        <begin position="160"/>
        <end position="163"/>
    </location>
</feature>
<feature type="helix" evidence="11">
    <location>
        <begin position="171"/>
        <end position="175"/>
    </location>
</feature>
<feature type="turn" evidence="5">
    <location>
        <begin position="181"/>
        <end position="183"/>
    </location>
</feature>
<feature type="helix" evidence="11">
    <location>
        <begin position="184"/>
        <end position="187"/>
    </location>
</feature>
<feature type="turn" evidence="11">
    <location>
        <begin position="188"/>
        <end position="192"/>
    </location>
</feature>
<feature type="strand" evidence="11">
    <location>
        <begin position="204"/>
        <end position="211"/>
    </location>
</feature>
<feature type="strand" evidence="10">
    <location>
        <begin position="213"/>
        <end position="215"/>
    </location>
</feature>
<feature type="strand" evidence="11">
    <location>
        <begin position="222"/>
        <end position="227"/>
    </location>
</feature>
<feature type="turn" evidence="11">
    <location>
        <begin position="228"/>
        <end position="230"/>
    </location>
</feature>
<feature type="helix" evidence="11">
    <location>
        <begin position="237"/>
        <end position="242"/>
    </location>
</feature>
<feature type="helix" evidence="11">
    <location>
        <begin position="244"/>
        <end position="251"/>
    </location>
</feature>
<feature type="strand" evidence="9">
    <location>
        <begin position="257"/>
        <end position="259"/>
    </location>
</feature>
<feature type="strand" evidence="11">
    <location>
        <begin position="266"/>
        <end position="270"/>
    </location>
</feature>
<feature type="helix" evidence="11">
    <location>
        <begin position="272"/>
        <end position="277"/>
    </location>
</feature>
<feature type="helix" evidence="11">
    <location>
        <begin position="290"/>
        <end position="298"/>
    </location>
</feature>
<feature type="strand" evidence="11">
    <location>
        <begin position="301"/>
        <end position="304"/>
    </location>
</feature>
<feature type="strand" evidence="11">
    <location>
        <begin position="306"/>
        <end position="312"/>
    </location>
</feature>
<feature type="strand" evidence="11">
    <location>
        <begin position="315"/>
        <end position="317"/>
    </location>
</feature>
<feature type="strand" evidence="11">
    <location>
        <begin position="319"/>
        <end position="326"/>
    </location>
</feature>
<feature type="strand" evidence="11">
    <location>
        <begin position="337"/>
        <end position="339"/>
    </location>
</feature>
<feature type="helix" evidence="11">
    <location>
        <begin position="340"/>
        <end position="342"/>
    </location>
</feature>
<feature type="strand" evidence="11">
    <location>
        <begin position="343"/>
        <end position="345"/>
    </location>
</feature>
<feature type="helix" evidence="11">
    <location>
        <begin position="350"/>
        <end position="360"/>
    </location>
</feature>
<feature type="strand" evidence="5">
    <location>
        <begin position="367"/>
        <end position="369"/>
    </location>
</feature>
<feature type="turn" evidence="11">
    <location>
        <begin position="373"/>
        <end position="377"/>
    </location>
</feature>
<feature type="strand" evidence="11">
    <location>
        <begin position="383"/>
        <end position="391"/>
    </location>
</feature>
<feature type="strand" evidence="11">
    <location>
        <begin position="394"/>
        <end position="401"/>
    </location>
</feature>
<feature type="strand" evidence="11">
    <location>
        <begin position="404"/>
        <end position="408"/>
    </location>
</feature>
<feature type="turn" evidence="11">
    <location>
        <begin position="420"/>
        <end position="423"/>
    </location>
</feature>
<feature type="strand" evidence="11">
    <location>
        <begin position="424"/>
        <end position="426"/>
    </location>
</feature>
<feature type="strand" evidence="5">
    <location>
        <begin position="434"/>
        <end position="436"/>
    </location>
</feature>
<feature type="helix" evidence="11">
    <location>
        <begin position="440"/>
        <end position="444"/>
    </location>
</feature>
<feature type="strand" evidence="11">
    <location>
        <begin position="450"/>
        <end position="452"/>
    </location>
</feature>
<feature type="strand" evidence="11">
    <location>
        <begin position="458"/>
        <end position="460"/>
    </location>
</feature>
<feature type="strand" evidence="11">
    <location>
        <begin position="463"/>
        <end position="467"/>
    </location>
</feature>
<feature type="strand" evidence="9">
    <location>
        <begin position="476"/>
        <end position="479"/>
    </location>
</feature>
<feature type="helix" evidence="11">
    <location>
        <begin position="492"/>
        <end position="494"/>
    </location>
</feature>
<feature type="strand" evidence="11">
    <location>
        <begin position="499"/>
        <end position="503"/>
    </location>
</feature>
<feature type="strand" evidence="11">
    <location>
        <begin position="505"/>
        <end position="507"/>
    </location>
</feature>
<feature type="strand" evidence="11">
    <location>
        <begin position="512"/>
        <end position="514"/>
    </location>
</feature>
<feature type="helix" evidence="11">
    <location>
        <begin position="515"/>
        <end position="522"/>
    </location>
</feature>
<feature type="strand" evidence="11">
    <location>
        <begin position="528"/>
        <end position="531"/>
    </location>
</feature>
<feature type="strand" evidence="11">
    <location>
        <begin position="538"/>
        <end position="548"/>
    </location>
</feature>
<feature type="helix" evidence="11">
    <location>
        <begin position="550"/>
        <end position="561"/>
    </location>
</feature>
<feature type="strand" evidence="8">
    <location>
        <begin position="563"/>
        <end position="565"/>
    </location>
</feature>
<feature type="strand" evidence="11">
    <location>
        <begin position="569"/>
        <end position="571"/>
    </location>
</feature>
<feature type="strand" evidence="11">
    <location>
        <begin position="573"/>
        <end position="578"/>
    </location>
</feature>
<feature type="helix" evidence="11">
    <location>
        <begin position="583"/>
        <end position="585"/>
    </location>
</feature>
<feature type="helix" evidence="9">
    <location>
        <begin position="598"/>
        <end position="601"/>
    </location>
</feature>
<feature type="helix" evidence="9">
    <location>
        <begin position="603"/>
        <end position="605"/>
    </location>
</feature>
<feature type="turn" evidence="11">
    <location>
        <begin position="608"/>
        <end position="610"/>
    </location>
</feature>
<feature type="strand" evidence="11">
    <location>
        <begin position="622"/>
        <end position="624"/>
    </location>
</feature>
<feature type="strand" evidence="11">
    <location>
        <begin position="627"/>
        <end position="634"/>
    </location>
</feature>
<feature type="strand" evidence="6">
    <location>
        <begin position="641"/>
        <end position="643"/>
    </location>
</feature>
<feature type="strand" evidence="11">
    <location>
        <begin position="647"/>
        <end position="653"/>
    </location>
</feature>
<feature type="strand" evidence="11">
    <location>
        <begin position="656"/>
        <end position="663"/>
    </location>
</feature>
<feature type="turn" evidence="11">
    <location>
        <begin position="664"/>
        <end position="667"/>
    </location>
</feature>
<feature type="strand" evidence="7">
    <location>
        <begin position="675"/>
        <end position="677"/>
    </location>
</feature>
<feature type="strand" evidence="11">
    <location>
        <begin position="682"/>
        <end position="686"/>
    </location>
</feature>
<feature type="helix" evidence="11">
    <location>
        <begin position="689"/>
        <end position="692"/>
    </location>
</feature>
<feature type="helix" evidence="11">
    <location>
        <begin position="696"/>
        <end position="698"/>
    </location>
</feature>
<feature type="strand" evidence="11">
    <location>
        <begin position="699"/>
        <end position="705"/>
    </location>
</feature>
<feature type="turn" evidence="11">
    <location>
        <begin position="706"/>
        <end position="709"/>
    </location>
</feature>
<feature type="strand" evidence="11">
    <location>
        <begin position="710"/>
        <end position="716"/>
    </location>
</feature>
<feature type="helix" evidence="11">
    <location>
        <begin position="717"/>
        <end position="719"/>
    </location>
</feature>
<feature type="strand" evidence="11">
    <location>
        <begin position="736"/>
        <end position="745"/>
    </location>
</feature>
<feature type="helix" evidence="11">
    <location>
        <begin position="752"/>
        <end position="754"/>
    </location>
</feature>
<feature type="strand" evidence="11">
    <location>
        <begin position="762"/>
        <end position="774"/>
    </location>
</feature>
<feature type="strand" evidence="11">
    <location>
        <begin position="776"/>
        <end position="782"/>
    </location>
</feature>
<feature type="strand" evidence="11">
    <location>
        <begin position="784"/>
        <end position="806"/>
    </location>
</feature>
<feature type="strand" evidence="11">
    <location>
        <begin position="809"/>
        <end position="812"/>
    </location>
</feature>
<feature type="helix" evidence="11">
    <location>
        <begin position="814"/>
        <end position="821"/>
    </location>
</feature>
<feature type="strand" evidence="11">
    <location>
        <begin position="826"/>
        <end position="828"/>
    </location>
</feature>
<feature type="strand" evidence="11">
    <location>
        <begin position="840"/>
        <end position="844"/>
    </location>
</feature>
<feature type="helix" evidence="11">
    <location>
        <begin position="849"/>
        <end position="852"/>
    </location>
</feature>
<feature type="helix" evidence="11">
    <location>
        <begin position="855"/>
        <end position="857"/>
    </location>
</feature>
<feature type="helix" evidence="11">
    <location>
        <begin position="860"/>
        <end position="864"/>
    </location>
</feature>
<feature type="helix" evidence="11">
    <location>
        <begin position="867"/>
        <end position="870"/>
    </location>
</feature>
<feature type="helix" evidence="11">
    <location>
        <begin position="871"/>
        <end position="873"/>
    </location>
</feature>
<feature type="strand" evidence="11">
    <location>
        <begin position="874"/>
        <end position="877"/>
    </location>
</feature>
<feature type="strand" evidence="11">
    <location>
        <begin position="885"/>
        <end position="893"/>
    </location>
</feature>
<feature type="strand" evidence="11">
    <location>
        <begin position="896"/>
        <end position="904"/>
    </location>
</feature>
<feature type="strand" evidence="11">
    <location>
        <begin position="929"/>
        <end position="932"/>
    </location>
</feature>
<gene>
    <name type="ordered locus">MG192</name>
</gene>
<keyword id="KW-0002">3D-structure</keyword>
<keyword id="KW-0130">Cell adhesion</keyword>
<keyword id="KW-1003">Cell membrane</keyword>
<keyword id="KW-0472">Membrane</keyword>
<keyword id="KW-1185">Reference proteome</keyword>
<keyword id="KW-0732">Signal</keyword>
<keyword id="KW-0812">Transmembrane</keyword>
<keyword id="KW-1133">Transmembrane helix</keyword>
<evidence type="ECO:0000255" key="1"/>
<evidence type="ECO:0000256" key="2">
    <source>
        <dbReference type="SAM" id="MobiDB-lite"/>
    </source>
</evidence>
<evidence type="ECO:0000269" key="3">
    <source>
    </source>
</evidence>
<evidence type="ECO:0000305" key="4"/>
<evidence type="ECO:0007829" key="5">
    <source>
        <dbReference type="PDB" id="5OX7"/>
    </source>
</evidence>
<evidence type="ECO:0007829" key="6">
    <source>
        <dbReference type="PDB" id="6R3T"/>
    </source>
</evidence>
<evidence type="ECO:0007829" key="7">
    <source>
        <dbReference type="PDB" id="6R41"/>
    </source>
</evidence>
<evidence type="ECO:0007829" key="8">
    <source>
        <dbReference type="PDB" id="6R43"/>
    </source>
</evidence>
<evidence type="ECO:0007829" key="9">
    <source>
        <dbReference type="PDB" id="6RUT"/>
    </source>
</evidence>
<evidence type="ECO:0007829" key="10">
    <source>
        <dbReference type="PDB" id="6SE5"/>
    </source>
</evidence>
<evidence type="ECO:0007829" key="11">
    <source>
        <dbReference type="PDB" id="6SE7"/>
    </source>
</evidence>
<protein>
    <recommendedName>
        <fullName>Mgp-operon protein 3</fullName>
        <shortName>Mgp3</shortName>
    </recommendedName>
    <alternativeName>
        <fullName>ORF-3 protein</fullName>
    </alternativeName>
</protein>